<evidence type="ECO:0000255" key="1">
    <source>
        <dbReference type="HAMAP-Rule" id="MF_01625"/>
    </source>
</evidence>
<sequence length="498" mass="56389">MAHPHLLAERISRLSSSLEKGLYERSHAIRLCLLAALSGESVFLLGPPGIAKSLIARRLKFAFQNARAFEYLMTRFSTPEEVFGPLSIQALKDEGRYERLTSGYLPEAEIVFLDEIWKAGPAILNTLLTAINERQFRNGAHVEKIPMRLLVAASNELPEADSSLEALYDRMLIRLWLDKVQDKANFRSMLTSQQDENDNPVPDALQVTDEEYERWQKEIGEITLPDHVFELIFMLRQQLDKLPDAPYVSDRRWKKAIRLLQASAFFSGRSAVAPVDLILLKDCLWYDAQSLNLIQQQIDVLMTGHAWQQQGMLTRLGAIVQRHLQLQQQQSDKTALTVIRLGGIFSRRQQYQLPVNVTASTLTLLLQKPLKLHDMEVVHISFERSALEQWLSKGGEIRGKLNGIGFAQKLNLEVDSAQHLVVRDVSLQGSTLALPGSSAEGLPGEIKQQLEELESDWRKQHALFSEQQKCLFIPGDWLGRIEASLQDVGAQIRQAQQC</sequence>
<organism>
    <name type="scientific">Escherichia coli (strain K12 / MC4100 / BW2952)</name>
    <dbReference type="NCBI Taxonomy" id="595496"/>
    <lineage>
        <taxon>Bacteria</taxon>
        <taxon>Pseudomonadati</taxon>
        <taxon>Pseudomonadota</taxon>
        <taxon>Gammaproteobacteria</taxon>
        <taxon>Enterobacterales</taxon>
        <taxon>Enterobacteriaceae</taxon>
        <taxon>Escherichia</taxon>
    </lineage>
</organism>
<accession>C4ZZ24</accession>
<reference key="1">
    <citation type="journal article" date="2009" name="J. Bacteriol.">
        <title>Genomic sequencing reveals regulatory mutations and recombinational events in the widely used MC4100 lineage of Escherichia coli K-12.</title>
        <authorList>
            <person name="Ferenci T."/>
            <person name="Zhou Z."/>
            <person name="Betteridge T."/>
            <person name="Ren Y."/>
            <person name="Liu Y."/>
            <person name="Feng L."/>
            <person name="Reeves P.R."/>
            <person name="Wang L."/>
        </authorList>
    </citation>
    <scope>NUCLEOTIDE SEQUENCE [LARGE SCALE GENOMIC DNA]</scope>
    <source>
        <strain>K12 / MC4100 / BW2952</strain>
    </source>
</reference>
<proteinExistence type="inferred from homology"/>
<gene>
    <name evidence="1" type="primary">ravA</name>
    <name type="ordered locus">BWG_3437</name>
</gene>
<name>RAVA_ECOBW</name>
<keyword id="KW-0067">ATP-binding</keyword>
<keyword id="KW-0143">Chaperone</keyword>
<keyword id="KW-0963">Cytoplasm</keyword>
<keyword id="KW-0378">Hydrolase</keyword>
<keyword id="KW-0547">Nucleotide-binding</keyword>
<dbReference type="EC" id="3.6.1.-" evidence="1"/>
<dbReference type="EMBL" id="CP001396">
    <property type="protein sequence ID" value="ACR63238.1"/>
    <property type="molecule type" value="Genomic_DNA"/>
</dbReference>
<dbReference type="RefSeq" id="WP_001299914.1">
    <property type="nucleotide sequence ID" value="NC_012759.1"/>
</dbReference>
<dbReference type="SMR" id="C4ZZ24"/>
<dbReference type="KEGG" id="ebw:BWG_3437"/>
<dbReference type="HOGENOM" id="CLU_018678_1_0_6"/>
<dbReference type="GO" id="GO:0005737">
    <property type="term" value="C:cytoplasm"/>
    <property type="evidence" value="ECO:0007669"/>
    <property type="project" value="UniProtKB-SubCell"/>
</dbReference>
<dbReference type="GO" id="GO:0005524">
    <property type="term" value="F:ATP binding"/>
    <property type="evidence" value="ECO:0007669"/>
    <property type="project" value="UniProtKB-KW"/>
</dbReference>
<dbReference type="GO" id="GO:0016887">
    <property type="term" value="F:ATP hydrolysis activity"/>
    <property type="evidence" value="ECO:0007669"/>
    <property type="project" value="UniProtKB-UniRule"/>
</dbReference>
<dbReference type="CDD" id="cd00009">
    <property type="entry name" value="AAA"/>
    <property type="match status" value="1"/>
</dbReference>
<dbReference type="FunFam" id="3.40.50.300:FF:000410">
    <property type="entry name" value="ATPase RavA"/>
    <property type="match status" value="1"/>
</dbReference>
<dbReference type="Gene3D" id="1.20.58.1510">
    <property type="match status" value="1"/>
</dbReference>
<dbReference type="Gene3D" id="2.40.128.430">
    <property type="match status" value="1"/>
</dbReference>
<dbReference type="Gene3D" id="3.40.50.300">
    <property type="entry name" value="P-loop containing nucleotide triphosphate hydrolases"/>
    <property type="match status" value="1"/>
</dbReference>
<dbReference type="HAMAP" id="MF_01625">
    <property type="entry name" value="ATPase_RavA"/>
    <property type="match status" value="1"/>
</dbReference>
<dbReference type="InterPro" id="IPR003593">
    <property type="entry name" value="AAA+_ATPase"/>
</dbReference>
<dbReference type="InterPro" id="IPR023671">
    <property type="entry name" value="ATPase_RavA"/>
</dbReference>
<dbReference type="InterPro" id="IPR022547">
    <property type="entry name" value="ATPase_RavA_C"/>
</dbReference>
<dbReference type="InterPro" id="IPR045427">
    <property type="entry name" value="MoxR"/>
</dbReference>
<dbReference type="InterPro" id="IPR027417">
    <property type="entry name" value="P-loop_NTPase"/>
</dbReference>
<dbReference type="InterPro" id="IPR041538">
    <property type="entry name" value="RavA-like_AAA_lid"/>
</dbReference>
<dbReference type="InterPro" id="IPR050513">
    <property type="entry name" value="RavA_ATPases"/>
</dbReference>
<dbReference type="InterPro" id="IPR046898">
    <property type="entry name" value="RavA_LARA_dom"/>
</dbReference>
<dbReference type="InterPro" id="IPR046932">
    <property type="entry name" value="RavA_LARA_sf"/>
</dbReference>
<dbReference type="NCBIfam" id="NF010054">
    <property type="entry name" value="PRK13531.1"/>
    <property type="match status" value="1"/>
</dbReference>
<dbReference type="PANTHER" id="PTHR32204">
    <property type="entry name" value="ATPASE RAVA"/>
    <property type="match status" value="1"/>
</dbReference>
<dbReference type="PANTHER" id="PTHR32204:SF0">
    <property type="entry name" value="ATPASE RAVA"/>
    <property type="match status" value="1"/>
</dbReference>
<dbReference type="Pfam" id="PF17868">
    <property type="entry name" value="AAA_lid_8"/>
    <property type="match status" value="1"/>
</dbReference>
<dbReference type="Pfam" id="PF12592">
    <property type="entry name" value="ATPase_RavA_C"/>
    <property type="match status" value="1"/>
</dbReference>
<dbReference type="Pfam" id="PF20030">
    <property type="entry name" value="bpMoxR"/>
    <property type="match status" value="1"/>
</dbReference>
<dbReference type="Pfam" id="PF20265">
    <property type="entry name" value="LARA_dom"/>
    <property type="match status" value="1"/>
</dbReference>
<dbReference type="SMART" id="SM00382">
    <property type="entry name" value="AAA"/>
    <property type="match status" value="1"/>
</dbReference>
<dbReference type="SUPFAM" id="SSF52540">
    <property type="entry name" value="P-loop containing nucleoside triphosphate hydrolases"/>
    <property type="match status" value="1"/>
</dbReference>
<protein>
    <recommendedName>
        <fullName evidence="1">Regulatory ATPase RavA</fullName>
        <ecNumber evidence="1">3.6.1.-</ecNumber>
    </recommendedName>
    <alternativeName>
        <fullName evidence="1">Regulatory ATPase variant A</fullName>
    </alternativeName>
</protein>
<feature type="chain" id="PRO_1000215743" description="Regulatory ATPase RavA">
    <location>
        <begin position="1"/>
        <end position="498"/>
    </location>
</feature>
<feature type="binding site" evidence="1">
    <location>
        <position position="23"/>
    </location>
    <ligand>
        <name>ADP</name>
        <dbReference type="ChEBI" id="CHEBI:456216"/>
    </ligand>
</feature>
<feature type="binding site" evidence="1">
    <location>
        <position position="49"/>
    </location>
    <ligand>
        <name>ADP</name>
        <dbReference type="ChEBI" id="CHEBI:456216"/>
    </ligand>
</feature>
<feature type="binding site" evidence="1">
    <location>
        <position position="50"/>
    </location>
    <ligand>
        <name>ADP</name>
        <dbReference type="ChEBI" id="CHEBI:456216"/>
    </ligand>
</feature>
<feature type="binding site" evidence="1">
    <location>
        <position position="51"/>
    </location>
    <ligand>
        <name>ADP</name>
        <dbReference type="ChEBI" id="CHEBI:456216"/>
    </ligand>
</feature>
<feature type="binding site" evidence="1">
    <location>
        <position position="52"/>
    </location>
    <ligand>
        <name>ADP</name>
        <dbReference type="ChEBI" id="CHEBI:456216"/>
    </ligand>
</feature>
<feature type="binding site" evidence="1">
    <location>
        <position position="53"/>
    </location>
    <ligand>
        <name>ADP</name>
        <dbReference type="ChEBI" id="CHEBI:456216"/>
    </ligand>
</feature>
<feature type="binding site" evidence="1">
    <location>
        <position position="54"/>
    </location>
    <ligand>
        <name>ADP</name>
        <dbReference type="ChEBI" id="CHEBI:456216"/>
    </ligand>
</feature>
<feature type="binding site" evidence="1">
    <location>
        <position position="196"/>
    </location>
    <ligand>
        <name>ADP</name>
        <dbReference type="ChEBI" id="CHEBI:456216"/>
    </ligand>
</feature>
<comment type="function">
    <text evidence="1">Component of the RavA-ViaA chaperone complex, which may act on the membrane to optimize the function of some of the respiratory chains. RavA functions as an ATPase.</text>
</comment>
<comment type="catalytic activity">
    <reaction evidence="1">
        <text>ATP + H2O = ADP + phosphate + H(+)</text>
        <dbReference type="Rhea" id="RHEA:13065"/>
        <dbReference type="ChEBI" id="CHEBI:15377"/>
        <dbReference type="ChEBI" id="CHEBI:15378"/>
        <dbReference type="ChEBI" id="CHEBI:30616"/>
        <dbReference type="ChEBI" id="CHEBI:43474"/>
        <dbReference type="ChEBI" id="CHEBI:456216"/>
    </reaction>
</comment>
<comment type="activity regulation">
    <text evidence="1">ATPase activity is stimulated by ViaA.</text>
</comment>
<comment type="subunit">
    <text evidence="1">Homohexamer. Interacts with ViaA.</text>
</comment>
<comment type="subcellular location">
    <subcellularLocation>
        <location evidence="1">Cytoplasm</location>
    </subcellularLocation>
</comment>
<comment type="similarity">
    <text evidence="1">Belongs to the RavA family.</text>
</comment>